<reference key="1">
    <citation type="journal article" date="2015" name="Proc. Natl. Acad. Sci. U.S.A.">
        <title>Trichodesmium genome maintains abundant, widespread noncoding DNA in situ, despite oligotrophic lifestyle.</title>
        <authorList>
            <person name="Walworth N."/>
            <person name="Pfreundt U."/>
            <person name="Nelson W.C."/>
            <person name="Mincer T."/>
            <person name="Heidelberg J.F."/>
            <person name="Fu F."/>
            <person name="Waterbury J.B."/>
            <person name="Glavina del Rio T."/>
            <person name="Goodwin L."/>
            <person name="Kyrpides N.C."/>
            <person name="Land M.L."/>
            <person name="Woyke T."/>
            <person name="Hutchins D.A."/>
            <person name="Hess W.R."/>
            <person name="Webb E.A."/>
        </authorList>
    </citation>
    <scope>NUCLEOTIDE SEQUENCE [LARGE SCALE GENOMIC DNA]</scope>
    <source>
        <strain>IMS101</strain>
    </source>
</reference>
<organism>
    <name type="scientific">Trichodesmium erythraeum (strain IMS101)</name>
    <dbReference type="NCBI Taxonomy" id="203124"/>
    <lineage>
        <taxon>Bacteria</taxon>
        <taxon>Bacillati</taxon>
        <taxon>Cyanobacteriota</taxon>
        <taxon>Cyanophyceae</taxon>
        <taxon>Oscillatoriophycideae</taxon>
        <taxon>Oscillatoriales</taxon>
        <taxon>Microcoleaceae</taxon>
        <taxon>Trichodesmium</taxon>
    </lineage>
</organism>
<protein>
    <recommendedName>
        <fullName evidence="1">Nucleoside triphosphate pyrophosphatase</fullName>
        <ecNumber evidence="1">3.6.1.9</ecNumber>
    </recommendedName>
    <alternativeName>
        <fullName evidence="1">Nucleotide pyrophosphatase</fullName>
        <shortName evidence="1">Nucleotide PPase</shortName>
    </alternativeName>
</protein>
<keyword id="KW-0963">Cytoplasm</keyword>
<keyword id="KW-0378">Hydrolase</keyword>
<keyword id="KW-0546">Nucleotide metabolism</keyword>
<accession>Q11A17</accession>
<dbReference type="EC" id="3.6.1.9" evidence="1"/>
<dbReference type="EMBL" id="CP000393">
    <property type="protein sequence ID" value="ABG49657.1"/>
    <property type="molecule type" value="Genomic_DNA"/>
</dbReference>
<dbReference type="RefSeq" id="WP_011610055.1">
    <property type="nucleotide sequence ID" value="NC_008312.1"/>
</dbReference>
<dbReference type="SMR" id="Q11A17"/>
<dbReference type="STRING" id="203124.Tery_0163"/>
<dbReference type="KEGG" id="ter:Tery_0163"/>
<dbReference type="eggNOG" id="COG0424">
    <property type="taxonomic scope" value="Bacteria"/>
</dbReference>
<dbReference type="HOGENOM" id="CLU_040416_1_2_3"/>
<dbReference type="OrthoDB" id="9807767at2"/>
<dbReference type="GO" id="GO:0005737">
    <property type="term" value="C:cytoplasm"/>
    <property type="evidence" value="ECO:0007669"/>
    <property type="project" value="UniProtKB-SubCell"/>
</dbReference>
<dbReference type="GO" id="GO:0047429">
    <property type="term" value="F:nucleoside triphosphate diphosphatase activity"/>
    <property type="evidence" value="ECO:0007669"/>
    <property type="project" value="UniProtKB-EC"/>
</dbReference>
<dbReference type="GO" id="GO:0009117">
    <property type="term" value="P:nucleotide metabolic process"/>
    <property type="evidence" value="ECO:0007669"/>
    <property type="project" value="UniProtKB-KW"/>
</dbReference>
<dbReference type="CDD" id="cd00555">
    <property type="entry name" value="Maf"/>
    <property type="match status" value="1"/>
</dbReference>
<dbReference type="Gene3D" id="3.90.950.10">
    <property type="match status" value="1"/>
</dbReference>
<dbReference type="HAMAP" id="MF_00528">
    <property type="entry name" value="Maf"/>
    <property type="match status" value="1"/>
</dbReference>
<dbReference type="InterPro" id="IPR029001">
    <property type="entry name" value="ITPase-like_fam"/>
</dbReference>
<dbReference type="InterPro" id="IPR003697">
    <property type="entry name" value="Maf-like"/>
</dbReference>
<dbReference type="NCBIfam" id="TIGR00172">
    <property type="entry name" value="maf"/>
    <property type="match status" value="1"/>
</dbReference>
<dbReference type="PANTHER" id="PTHR43213">
    <property type="entry name" value="BIFUNCTIONAL DTTP/UTP PYROPHOSPHATASE/METHYLTRANSFERASE PROTEIN-RELATED"/>
    <property type="match status" value="1"/>
</dbReference>
<dbReference type="PANTHER" id="PTHR43213:SF5">
    <property type="entry name" value="BIFUNCTIONAL DTTP_UTP PYROPHOSPHATASE_METHYLTRANSFERASE PROTEIN-RELATED"/>
    <property type="match status" value="1"/>
</dbReference>
<dbReference type="Pfam" id="PF02545">
    <property type="entry name" value="Maf"/>
    <property type="match status" value="1"/>
</dbReference>
<dbReference type="PIRSF" id="PIRSF006305">
    <property type="entry name" value="Maf"/>
    <property type="match status" value="1"/>
</dbReference>
<dbReference type="SUPFAM" id="SSF52972">
    <property type="entry name" value="ITPase-like"/>
    <property type="match status" value="1"/>
</dbReference>
<evidence type="ECO:0000255" key="1">
    <source>
        <dbReference type="HAMAP-Rule" id="MF_00528"/>
    </source>
</evidence>
<comment type="function">
    <text evidence="1">Nucleoside triphosphate pyrophosphatase. May have a dual role in cell division arrest and in preventing the incorporation of modified nucleotides into cellular nucleic acids.</text>
</comment>
<comment type="catalytic activity">
    <reaction evidence="1">
        <text>a ribonucleoside 5'-triphosphate + H2O = a ribonucleoside 5'-phosphate + diphosphate + H(+)</text>
        <dbReference type="Rhea" id="RHEA:23996"/>
        <dbReference type="ChEBI" id="CHEBI:15377"/>
        <dbReference type="ChEBI" id="CHEBI:15378"/>
        <dbReference type="ChEBI" id="CHEBI:33019"/>
        <dbReference type="ChEBI" id="CHEBI:58043"/>
        <dbReference type="ChEBI" id="CHEBI:61557"/>
        <dbReference type="EC" id="3.6.1.9"/>
    </reaction>
</comment>
<comment type="catalytic activity">
    <reaction evidence="1">
        <text>a 2'-deoxyribonucleoside 5'-triphosphate + H2O = a 2'-deoxyribonucleoside 5'-phosphate + diphosphate + H(+)</text>
        <dbReference type="Rhea" id="RHEA:44644"/>
        <dbReference type="ChEBI" id="CHEBI:15377"/>
        <dbReference type="ChEBI" id="CHEBI:15378"/>
        <dbReference type="ChEBI" id="CHEBI:33019"/>
        <dbReference type="ChEBI" id="CHEBI:61560"/>
        <dbReference type="ChEBI" id="CHEBI:65317"/>
        <dbReference type="EC" id="3.6.1.9"/>
    </reaction>
</comment>
<comment type="cofactor">
    <cofactor evidence="1">
        <name>a divalent metal cation</name>
        <dbReference type="ChEBI" id="CHEBI:60240"/>
    </cofactor>
</comment>
<comment type="subcellular location">
    <subcellularLocation>
        <location evidence="1">Cytoplasm</location>
    </subcellularLocation>
</comment>
<comment type="similarity">
    <text evidence="1">Belongs to the Maf family.</text>
</comment>
<proteinExistence type="inferred from homology"/>
<name>NTPP_TRIEI</name>
<sequence>MKIPSVILASSSSARLRLLKTVGINPIVMPSNFDESTIKLKEPRQLVETLAQAKAETIANSIMKEKLPEKQSNLILGCDSVLVIEDQIYGKPNDKQEAITRWQKMRGQVGQLYTGHALIDLSQNKTIVLCRMTKVHFSHVNDQEIEAYVATEEPLKCAGCFAIDGIGGLFIEKIDGCHTNVIGLSLPLFRVMLNNLGYQVSNFW</sequence>
<feature type="chain" id="PRO_0000267460" description="Nucleoside triphosphate pyrophosphatase">
    <location>
        <begin position="1"/>
        <end position="204"/>
    </location>
</feature>
<feature type="active site" description="Proton acceptor" evidence="1">
    <location>
        <position position="79"/>
    </location>
</feature>
<gene>
    <name type="ordered locus">Tery_0163</name>
</gene>